<proteinExistence type="inferred from homology"/>
<reference key="1">
    <citation type="journal article" date="2007" name="Genome Biol.">
        <title>Characterization and modeling of the Haemophilus influenzae core and supragenomes based on the complete genomic sequences of Rd and 12 clinical nontypeable strains.</title>
        <authorList>
            <person name="Hogg J.S."/>
            <person name="Hu F.Z."/>
            <person name="Janto B."/>
            <person name="Boissy R."/>
            <person name="Hayes J."/>
            <person name="Keefe R."/>
            <person name="Post J.C."/>
            <person name="Ehrlich G.D."/>
        </authorList>
    </citation>
    <scope>NUCLEOTIDE SEQUENCE [LARGE SCALE GENOMIC DNA]</scope>
    <source>
        <strain>PittEE</strain>
    </source>
</reference>
<gene>
    <name evidence="1" type="primary">cdd</name>
    <name type="ordered locus">CGSHiEE_04275</name>
</gene>
<protein>
    <recommendedName>
        <fullName evidence="1">Cytidine deaminase</fullName>
        <ecNumber evidence="1">3.5.4.5</ecNumber>
    </recommendedName>
    <alternativeName>
        <fullName evidence="1">Cytidine aminohydrolase</fullName>
        <shortName evidence="1">CDA</shortName>
    </alternativeName>
</protein>
<keyword id="KW-0378">Hydrolase</keyword>
<keyword id="KW-0479">Metal-binding</keyword>
<keyword id="KW-0862">Zinc</keyword>
<name>CDD_HAEIE</name>
<sequence length="292" mass="32611">MQELIKRTLPQDDALNQAIVNELRSQNWAGFLNYSQVQQLCHNFELTPLKLAMHLLPLAASYSHTAISHFNVGAIAIGEQGDFYFGANQEFANSAIQQTIHAEQSAISHAWLRNERRISDMVVNYTPCGHCRQFMNELHGAEKISIHLPHSQNNPLHSYLPDAFGPKDLDIAAHLLADENHDLIADHQDDLINQAILAANQSHCPYSNSPHGIAILFKNGDMVTGRYAENAAFNPSLPALQTALNFAYLNDKKLSDIERIVMAEKALKLSHKTMAETLLSTLTSVELEYYSL</sequence>
<feature type="chain" id="PRO_1000068955" description="Cytidine deaminase">
    <location>
        <begin position="1"/>
        <end position="292"/>
    </location>
</feature>
<feature type="domain" description="CMP/dCMP-type deaminase 1" evidence="2">
    <location>
        <begin position="47"/>
        <end position="167"/>
    </location>
</feature>
<feature type="domain" description="CMP/dCMP-type deaminase 2" evidence="2">
    <location>
        <begin position="186"/>
        <end position="292"/>
    </location>
</feature>
<feature type="active site" description="Proton donor" evidence="1">
    <location>
        <position position="103"/>
    </location>
</feature>
<feature type="binding site" evidence="1">
    <location>
        <begin position="88"/>
        <end position="90"/>
    </location>
    <ligand>
        <name>substrate</name>
    </ligand>
</feature>
<feature type="binding site" evidence="1">
    <location>
        <position position="101"/>
    </location>
    <ligand>
        <name>Zn(2+)</name>
        <dbReference type="ChEBI" id="CHEBI:29105"/>
        <note>catalytic</note>
    </ligand>
</feature>
<feature type="binding site" evidence="1">
    <location>
        <position position="128"/>
    </location>
    <ligand>
        <name>Zn(2+)</name>
        <dbReference type="ChEBI" id="CHEBI:29105"/>
        <note>catalytic</note>
    </ligand>
</feature>
<feature type="binding site" evidence="1">
    <location>
        <position position="131"/>
    </location>
    <ligand>
        <name>Zn(2+)</name>
        <dbReference type="ChEBI" id="CHEBI:29105"/>
        <note>catalytic</note>
    </ligand>
</feature>
<organism>
    <name type="scientific">Haemophilus influenzae (strain PittEE)</name>
    <dbReference type="NCBI Taxonomy" id="374930"/>
    <lineage>
        <taxon>Bacteria</taxon>
        <taxon>Pseudomonadati</taxon>
        <taxon>Pseudomonadota</taxon>
        <taxon>Gammaproteobacteria</taxon>
        <taxon>Pasteurellales</taxon>
        <taxon>Pasteurellaceae</taxon>
        <taxon>Haemophilus</taxon>
    </lineage>
</organism>
<accession>A5UBV9</accession>
<evidence type="ECO:0000255" key="1">
    <source>
        <dbReference type="HAMAP-Rule" id="MF_01558"/>
    </source>
</evidence>
<evidence type="ECO:0000255" key="2">
    <source>
        <dbReference type="PROSITE-ProRule" id="PRU01083"/>
    </source>
</evidence>
<comment type="function">
    <text evidence="1">This enzyme scavenges exogenous and endogenous cytidine and 2'-deoxycytidine for UMP synthesis.</text>
</comment>
<comment type="catalytic activity">
    <reaction evidence="1">
        <text>cytidine + H2O + H(+) = uridine + NH4(+)</text>
        <dbReference type="Rhea" id="RHEA:16069"/>
        <dbReference type="ChEBI" id="CHEBI:15377"/>
        <dbReference type="ChEBI" id="CHEBI:15378"/>
        <dbReference type="ChEBI" id="CHEBI:16704"/>
        <dbReference type="ChEBI" id="CHEBI:17562"/>
        <dbReference type="ChEBI" id="CHEBI:28938"/>
        <dbReference type="EC" id="3.5.4.5"/>
    </reaction>
</comment>
<comment type="catalytic activity">
    <reaction evidence="1">
        <text>2'-deoxycytidine + H2O + H(+) = 2'-deoxyuridine + NH4(+)</text>
        <dbReference type="Rhea" id="RHEA:13433"/>
        <dbReference type="ChEBI" id="CHEBI:15377"/>
        <dbReference type="ChEBI" id="CHEBI:15378"/>
        <dbReference type="ChEBI" id="CHEBI:15698"/>
        <dbReference type="ChEBI" id="CHEBI:16450"/>
        <dbReference type="ChEBI" id="CHEBI:28938"/>
        <dbReference type="EC" id="3.5.4.5"/>
    </reaction>
</comment>
<comment type="cofactor">
    <cofactor evidence="1">
        <name>Zn(2+)</name>
        <dbReference type="ChEBI" id="CHEBI:29105"/>
    </cofactor>
    <text evidence="1">Binds 1 zinc ion.</text>
</comment>
<comment type="subunit">
    <text evidence="1">Homodimer.</text>
</comment>
<comment type="similarity">
    <text evidence="1">Belongs to the cytidine and deoxycytidylate deaminase family.</text>
</comment>
<dbReference type="EC" id="3.5.4.5" evidence="1"/>
<dbReference type="EMBL" id="CP000671">
    <property type="protein sequence ID" value="ABQ98260.1"/>
    <property type="molecule type" value="Genomic_DNA"/>
</dbReference>
<dbReference type="SMR" id="A5UBV9"/>
<dbReference type="KEGG" id="hip:CGSHiEE_04275"/>
<dbReference type="HOGENOM" id="CLU_052424_0_0_6"/>
<dbReference type="GO" id="GO:0005829">
    <property type="term" value="C:cytosol"/>
    <property type="evidence" value="ECO:0007669"/>
    <property type="project" value="TreeGrafter"/>
</dbReference>
<dbReference type="GO" id="GO:0004126">
    <property type="term" value="F:cytidine deaminase activity"/>
    <property type="evidence" value="ECO:0007669"/>
    <property type="project" value="UniProtKB-UniRule"/>
</dbReference>
<dbReference type="GO" id="GO:0042802">
    <property type="term" value="F:identical protein binding"/>
    <property type="evidence" value="ECO:0007669"/>
    <property type="project" value="UniProtKB-ARBA"/>
</dbReference>
<dbReference type="GO" id="GO:0008270">
    <property type="term" value="F:zinc ion binding"/>
    <property type="evidence" value="ECO:0007669"/>
    <property type="project" value="UniProtKB-UniRule"/>
</dbReference>
<dbReference type="GO" id="GO:0009972">
    <property type="term" value="P:cytidine deamination"/>
    <property type="evidence" value="ECO:0007669"/>
    <property type="project" value="InterPro"/>
</dbReference>
<dbReference type="CDD" id="cd01283">
    <property type="entry name" value="cytidine_deaminase"/>
    <property type="match status" value="2"/>
</dbReference>
<dbReference type="FunFam" id="3.40.140.10:FF:000007">
    <property type="entry name" value="Cytidine deaminase"/>
    <property type="match status" value="1"/>
</dbReference>
<dbReference type="Gene3D" id="3.40.140.10">
    <property type="entry name" value="Cytidine Deaminase, domain 2"/>
    <property type="match status" value="2"/>
</dbReference>
<dbReference type="HAMAP" id="MF_01558">
    <property type="entry name" value="Cyt_deam"/>
    <property type="match status" value="1"/>
</dbReference>
<dbReference type="InterPro" id="IPR016192">
    <property type="entry name" value="APOBEC/CMP_deaminase_Zn-bd"/>
</dbReference>
<dbReference type="InterPro" id="IPR002125">
    <property type="entry name" value="CMP_dCMP_dom"/>
</dbReference>
<dbReference type="InterPro" id="IPR013171">
    <property type="entry name" value="Cyd/dCyd_deaminase_Zn-bd"/>
</dbReference>
<dbReference type="InterPro" id="IPR050202">
    <property type="entry name" value="Cyt/Deoxycyt_deaminase"/>
</dbReference>
<dbReference type="InterPro" id="IPR006263">
    <property type="entry name" value="Cyt_deam_dimer"/>
</dbReference>
<dbReference type="InterPro" id="IPR016193">
    <property type="entry name" value="Cytidine_deaminase-like"/>
</dbReference>
<dbReference type="InterPro" id="IPR020797">
    <property type="entry name" value="Cytidine_deaminase_bacteria"/>
</dbReference>
<dbReference type="NCBIfam" id="TIGR01355">
    <property type="entry name" value="cyt_deam_dimer"/>
    <property type="match status" value="1"/>
</dbReference>
<dbReference type="NCBIfam" id="NF006537">
    <property type="entry name" value="PRK09027.1"/>
    <property type="match status" value="1"/>
</dbReference>
<dbReference type="PANTHER" id="PTHR11644">
    <property type="entry name" value="CYTIDINE DEAMINASE"/>
    <property type="match status" value="1"/>
</dbReference>
<dbReference type="PANTHER" id="PTHR11644:SF2">
    <property type="entry name" value="CYTIDINE DEAMINASE"/>
    <property type="match status" value="1"/>
</dbReference>
<dbReference type="Pfam" id="PF00383">
    <property type="entry name" value="dCMP_cyt_deam_1"/>
    <property type="match status" value="1"/>
</dbReference>
<dbReference type="Pfam" id="PF08211">
    <property type="entry name" value="dCMP_cyt_deam_2"/>
    <property type="match status" value="1"/>
</dbReference>
<dbReference type="PIRSF" id="PIRSF006334">
    <property type="entry name" value="Cdd_plus_pseudo"/>
    <property type="match status" value="1"/>
</dbReference>
<dbReference type="SUPFAM" id="SSF53927">
    <property type="entry name" value="Cytidine deaminase-like"/>
    <property type="match status" value="2"/>
</dbReference>
<dbReference type="PROSITE" id="PS00903">
    <property type="entry name" value="CYT_DCMP_DEAMINASES_1"/>
    <property type="match status" value="1"/>
</dbReference>
<dbReference type="PROSITE" id="PS51747">
    <property type="entry name" value="CYT_DCMP_DEAMINASES_2"/>
    <property type="match status" value="2"/>
</dbReference>